<dbReference type="EMBL" id="M30139">
    <property type="status" value="NOT_ANNOTATED_CDS"/>
    <property type="molecule type" value="Genomic_DNA"/>
</dbReference>
<dbReference type="EMBL" id="U00039">
    <property type="status" value="NOT_ANNOTATED_CDS"/>
    <property type="molecule type" value="Genomic_DNA"/>
</dbReference>
<dbReference type="EMBL" id="U00096">
    <property type="protein sequence ID" value="AAT48191.1"/>
    <property type="molecule type" value="Genomic_DNA"/>
</dbReference>
<dbReference type="EMBL" id="AP009048">
    <property type="protein sequence ID" value="BAE77738.1"/>
    <property type="molecule type" value="Genomic_DNA"/>
</dbReference>
<dbReference type="RefSeq" id="WP_001135732.1">
    <property type="nucleotide sequence ID" value="NZ_SSZK01000068.1"/>
</dbReference>
<dbReference type="RefSeq" id="YP_026229.1">
    <property type="nucleotide sequence ID" value="NC_000913.3"/>
</dbReference>
<dbReference type="SMR" id="P37305"/>
<dbReference type="BioGRID" id="4259713">
    <property type="interactions" value="13"/>
</dbReference>
<dbReference type="FunCoup" id="P37305">
    <property type="interactions" value="182"/>
</dbReference>
<dbReference type="IntAct" id="P37305">
    <property type="interactions" value="1"/>
</dbReference>
<dbReference type="STRING" id="511145.b4455"/>
<dbReference type="TCDB" id="1.E.53.1.2">
    <property type="family name" value="the toxic hok/gef protein (hok/gef) family"/>
</dbReference>
<dbReference type="PaxDb" id="511145-b4455"/>
<dbReference type="EnsemblBacteria" id="AAT48191">
    <property type="protein sequence ID" value="AAT48191"/>
    <property type="gene ID" value="b4455"/>
</dbReference>
<dbReference type="GeneID" id="2847732"/>
<dbReference type="KEGG" id="ecj:JW3526"/>
<dbReference type="KEGG" id="eco:b4455"/>
<dbReference type="KEGG" id="ecoc:C3026_19280"/>
<dbReference type="PATRIC" id="fig|83333.103.peg.4475"/>
<dbReference type="EchoBASE" id="EB2250"/>
<dbReference type="eggNOG" id="ENOG50337V7">
    <property type="taxonomic scope" value="Bacteria"/>
</dbReference>
<dbReference type="HOGENOM" id="CLU_177638_2_2_6"/>
<dbReference type="InParanoid" id="P37305"/>
<dbReference type="OMA" id="LACDIKQ"/>
<dbReference type="OrthoDB" id="5880683at2"/>
<dbReference type="PhylomeDB" id="P37305"/>
<dbReference type="BioCyc" id="EcoCyc:MONOMER0-1605"/>
<dbReference type="PRO" id="PR:P37305"/>
<dbReference type="Proteomes" id="UP000000625">
    <property type="component" value="Chromosome"/>
</dbReference>
<dbReference type="GO" id="GO:0005886">
    <property type="term" value="C:plasma membrane"/>
    <property type="evidence" value="ECO:0007669"/>
    <property type="project" value="UniProtKB-SubCell"/>
</dbReference>
<dbReference type="InterPro" id="IPR000021">
    <property type="entry name" value="Hok/gef_toxin"/>
</dbReference>
<dbReference type="InterPro" id="IPR018084">
    <property type="entry name" value="Hok/gef_toxin_CS"/>
</dbReference>
<dbReference type="NCBIfam" id="NF007290">
    <property type="entry name" value="PRK09759.1"/>
    <property type="match status" value="1"/>
</dbReference>
<dbReference type="Pfam" id="PF01848">
    <property type="entry name" value="HOK_GEF"/>
    <property type="match status" value="1"/>
</dbReference>
<dbReference type="PRINTS" id="PR00281">
    <property type="entry name" value="HOKGEFTOXIC"/>
</dbReference>
<dbReference type="PROSITE" id="PS00556">
    <property type="entry name" value="HOK_GEF"/>
    <property type="match status" value="1"/>
</dbReference>
<proteinExistence type="evidence at protein level"/>
<comment type="function">
    <text evidence="3 4 7">Toxic component of a type I toxin-antitoxin (TA) system (Probable). When overexpressed kills cells within minutes; causes collapse of the transmembrane potential and arrest of respiration (PubMed:10361310, PubMed:20105222). Its toxic effect is probably neutralized by antisense antitoxin RNA SokA (PubMed:10361310).</text>
</comment>
<comment type="subcellular location">
    <subcellularLocation>
        <location evidence="1 6">Cell inner membrane</location>
        <topology evidence="1">Single-pass membrane protein</topology>
    </subcellularLocation>
</comment>
<comment type="induction">
    <text evidence="4">May be repressed by MqsA.</text>
</comment>
<comment type="miscellaneous">
    <text evidence="7">Interrupted by an IS150 element, which silences the locus in strain K12 MG1655.</text>
</comment>
<comment type="similarity">
    <text evidence="6">Belongs to the Hok/Gef family.</text>
</comment>
<accession>P37305</accession>
<accession>Q2M7L8</accession>
<sequence>MPQKYRLLSLIVICFTLLFFTWMIRDSLCELHIKQESYELAAFLACKLKE</sequence>
<gene>
    <name evidence="5" type="primary">hokA</name>
    <name type="synonym">yiaZ</name>
    <name type="ordered locus">b4455</name>
    <name type="ordered locus">JW3526</name>
</gene>
<protein>
    <recommendedName>
        <fullName>Protein HokA</fullName>
    </recommendedName>
</protein>
<reference key="1">
    <citation type="journal article" date="1990" name="Proc. Natl. Acad. Sci. U.S.A.">
        <title>Major cold shock protein of Escherichia coli.</title>
        <authorList>
            <person name="Goldstein J."/>
            <person name="Pollitt N.S."/>
            <person name="Inouye M."/>
        </authorList>
    </citation>
    <scope>NUCLEOTIDE SEQUENCE [GENOMIC DNA]</scope>
</reference>
<reference key="2">
    <citation type="journal article" date="1994" name="Nucleic Acids Res.">
        <title>Analysis of the Escherichia coli genome. V. DNA sequence of the region from 76.0 to 81.5 minutes.</title>
        <authorList>
            <person name="Sofia H.J."/>
            <person name="Burland V."/>
            <person name="Daniels D.L."/>
            <person name="Plunkett G. III"/>
            <person name="Blattner F.R."/>
        </authorList>
    </citation>
    <scope>NUCLEOTIDE SEQUENCE [LARGE SCALE GENOMIC DNA]</scope>
    <source>
        <strain>K12 / MG1655 / ATCC 47076</strain>
    </source>
</reference>
<reference key="3">
    <citation type="journal article" date="1997" name="Science">
        <title>The complete genome sequence of Escherichia coli K-12.</title>
        <authorList>
            <person name="Blattner F.R."/>
            <person name="Plunkett G. III"/>
            <person name="Bloch C.A."/>
            <person name="Perna N.T."/>
            <person name="Burland V."/>
            <person name="Riley M."/>
            <person name="Collado-Vides J."/>
            <person name="Glasner J.D."/>
            <person name="Rode C.K."/>
            <person name="Mayhew G.F."/>
            <person name="Gregor J."/>
            <person name="Davis N.W."/>
            <person name="Kirkpatrick H.A."/>
            <person name="Goeden M.A."/>
            <person name="Rose D.J."/>
            <person name="Mau B."/>
            <person name="Shao Y."/>
        </authorList>
    </citation>
    <scope>NUCLEOTIDE SEQUENCE [LARGE SCALE GENOMIC DNA]</scope>
    <source>
        <strain>K12 / MG1655 / ATCC 47076</strain>
    </source>
</reference>
<reference key="4">
    <citation type="journal article" date="2006" name="Mol. Syst. Biol.">
        <title>Highly accurate genome sequences of Escherichia coli K-12 strains MG1655 and W3110.</title>
        <authorList>
            <person name="Hayashi K."/>
            <person name="Morooka N."/>
            <person name="Yamamoto Y."/>
            <person name="Fujita K."/>
            <person name="Isono K."/>
            <person name="Choi S."/>
            <person name="Ohtsubo E."/>
            <person name="Baba T."/>
            <person name="Wanner B.L."/>
            <person name="Mori H."/>
            <person name="Horiuchi T."/>
        </authorList>
    </citation>
    <scope>NUCLEOTIDE SEQUENCE [LARGE SCALE GENOMIC DNA]</scope>
    <source>
        <strain>K12 / W3110 / ATCC 27325 / DSM 5911</strain>
    </source>
</reference>
<reference key="5">
    <citation type="journal article" date="1994" name="Trends Biochem. Sci.">
        <title>New genes in old sequence: a strategy for finding genes in the bacterial genome.</title>
        <authorList>
            <person name="Borodovsky M."/>
            <person name="Koonin E.V."/>
            <person name="Rudd K.E."/>
        </authorList>
    </citation>
    <scope>IDENTIFICATION</scope>
</reference>
<reference key="6">
    <citation type="journal article" date="1994" name="Nucleic Acids Res.">
        <title>Intrinsic and extrinsic approaches for detecting genes in a bacterial genome.</title>
        <authorList>
            <person name="Borodovsky M."/>
            <person name="Rudd K.E."/>
            <person name="Koonin E.V."/>
        </authorList>
    </citation>
    <scope>IDENTIFICATION</scope>
</reference>
<reference key="7">
    <citation type="journal article" date="1999" name="Mol. Microbiol.">
        <title>Multiple hok genes on the chromosome of Escherichia coli.</title>
        <authorList>
            <person name="Pedersen K."/>
            <person name="Gerdes K."/>
        </authorList>
    </citation>
    <scope>FUNCTION</scope>
    <source>
        <strain>C / 1055</strain>
        <strain>K12 / MG1655 / ATCC 47076</strain>
    </source>
</reference>
<reference key="8">
    <citation type="journal article" date="2010" name="Environ. Microbiol.">
        <title>Escherichia coli toxin/antitoxin pair MqsR/MqsA regulate toxin CspD.</title>
        <authorList>
            <person name="Kim Y."/>
            <person name="Wang X."/>
            <person name="Zhang X.S."/>
            <person name="Grigoriu S."/>
            <person name="Page R."/>
            <person name="Peti W."/>
            <person name="Wood T.K."/>
        </authorList>
    </citation>
    <scope>FUNCTION AS A TOXIN</scope>
    <scope>INDUCTION</scope>
    <source>
        <strain>K12 / BW25113</strain>
    </source>
</reference>
<name>HOKA_ECOLI</name>
<keyword id="KW-0997">Cell inner membrane</keyword>
<keyword id="KW-1003">Cell membrane</keyword>
<keyword id="KW-0472">Membrane</keyword>
<keyword id="KW-1185">Reference proteome</keyword>
<keyword id="KW-1277">Toxin-antitoxin system</keyword>
<keyword id="KW-0812">Transmembrane</keyword>
<keyword id="KW-1133">Transmembrane helix</keyword>
<evidence type="ECO:0000250" key="1">
    <source>
        <dbReference type="UniProtKB" id="P0ACG4"/>
    </source>
</evidence>
<evidence type="ECO:0000255" key="2"/>
<evidence type="ECO:0000269" key="3">
    <source>
    </source>
</evidence>
<evidence type="ECO:0000269" key="4">
    <source>
    </source>
</evidence>
<evidence type="ECO:0000303" key="5">
    <source>
    </source>
</evidence>
<evidence type="ECO:0000305" key="6"/>
<evidence type="ECO:0000305" key="7">
    <source>
    </source>
</evidence>
<feature type="chain" id="PRO_0000199029" description="Protein HokA">
    <location>
        <begin position="1"/>
        <end position="50"/>
    </location>
</feature>
<feature type="transmembrane region" description="Helical" evidence="2">
    <location>
        <begin position="7"/>
        <end position="24"/>
    </location>
</feature>
<feature type="sequence conflict" description="In Ref. 2; M30139." evidence="6" ref="2">
    <original>MP</original>
    <variation>NA</variation>
    <location>
        <begin position="1"/>
        <end position="2"/>
    </location>
</feature>
<organism>
    <name type="scientific">Escherichia coli (strain K12)</name>
    <dbReference type="NCBI Taxonomy" id="83333"/>
    <lineage>
        <taxon>Bacteria</taxon>
        <taxon>Pseudomonadati</taxon>
        <taxon>Pseudomonadota</taxon>
        <taxon>Gammaproteobacteria</taxon>
        <taxon>Enterobacterales</taxon>
        <taxon>Enterobacteriaceae</taxon>
        <taxon>Escherichia</taxon>
    </lineage>
</organism>